<name>ATS19_HUMAN</name>
<reference key="1">
    <citation type="journal article" date="2004" name="Nature">
        <title>The DNA sequence and comparative analysis of human chromosome 5.</title>
        <authorList>
            <person name="Schmutz J."/>
            <person name="Martin J."/>
            <person name="Terry A."/>
            <person name="Couronne O."/>
            <person name="Grimwood J."/>
            <person name="Lowry S."/>
            <person name="Gordon L.A."/>
            <person name="Scott D."/>
            <person name="Xie G."/>
            <person name="Huang W."/>
            <person name="Hellsten U."/>
            <person name="Tran-Gyamfi M."/>
            <person name="She X."/>
            <person name="Prabhakar S."/>
            <person name="Aerts A."/>
            <person name="Altherr M."/>
            <person name="Bajorek E."/>
            <person name="Black S."/>
            <person name="Branscomb E."/>
            <person name="Caoile C."/>
            <person name="Challacombe J.F."/>
            <person name="Chan Y.M."/>
            <person name="Denys M."/>
            <person name="Detter J.C."/>
            <person name="Escobar J."/>
            <person name="Flowers D."/>
            <person name="Fotopulos D."/>
            <person name="Glavina T."/>
            <person name="Gomez M."/>
            <person name="Gonzales E."/>
            <person name="Goodstein D."/>
            <person name="Grigoriev I."/>
            <person name="Groza M."/>
            <person name="Hammon N."/>
            <person name="Hawkins T."/>
            <person name="Haydu L."/>
            <person name="Israni S."/>
            <person name="Jett J."/>
            <person name="Kadner K."/>
            <person name="Kimball H."/>
            <person name="Kobayashi A."/>
            <person name="Lopez F."/>
            <person name="Lou Y."/>
            <person name="Martinez D."/>
            <person name="Medina C."/>
            <person name="Morgan J."/>
            <person name="Nandkeshwar R."/>
            <person name="Noonan J.P."/>
            <person name="Pitluck S."/>
            <person name="Pollard M."/>
            <person name="Predki P."/>
            <person name="Priest J."/>
            <person name="Ramirez L."/>
            <person name="Retterer J."/>
            <person name="Rodriguez A."/>
            <person name="Rogers S."/>
            <person name="Salamov A."/>
            <person name="Salazar A."/>
            <person name="Thayer N."/>
            <person name="Tice H."/>
            <person name="Tsai M."/>
            <person name="Ustaszewska A."/>
            <person name="Vo N."/>
            <person name="Wheeler J."/>
            <person name="Wu K."/>
            <person name="Yang J."/>
            <person name="Dickson M."/>
            <person name="Cheng J.-F."/>
            <person name="Eichler E.E."/>
            <person name="Olsen A."/>
            <person name="Pennacchio L.A."/>
            <person name="Rokhsar D.S."/>
            <person name="Richardson P."/>
            <person name="Lucas S.M."/>
            <person name="Myers R.M."/>
            <person name="Rubin E.M."/>
        </authorList>
    </citation>
    <scope>NUCLEOTIDE SEQUENCE [LARGE SCALE GENOMIC DNA]</scope>
</reference>
<reference key="2">
    <citation type="journal article" date="2002" name="Gene">
        <title>Cloning, expression analysis, and structural characterization of seven novel human ADAMTSs, a family of metalloproteinases with disintegrin and thrombospondin-1 domains.</title>
        <authorList>
            <person name="Cal S."/>
            <person name="Obaya A.J."/>
            <person name="Llamazares M."/>
            <person name="Garabaya C."/>
            <person name="Quesada V."/>
            <person name="Lopez-Otin C."/>
        </authorList>
    </citation>
    <scope>NUCLEOTIDE SEQUENCE [MRNA] OF 7-1213</scope>
</reference>
<reference key="3">
    <citation type="journal article" date="2006" name="Science">
        <title>The consensus coding sequences of human breast and colorectal cancers.</title>
        <authorList>
            <person name="Sjoeblom T."/>
            <person name="Jones S."/>
            <person name="Wood L.D."/>
            <person name="Parsons D.W."/>
            <person name="Lin J."/>
            <person name="Barber T.D."/>
            <person name="Mandelker D."/>
            <person name="Leary R.J."/>
            <person name="Ptak J."/>
            <person name="Silliman N."/>
            <person name="Szabo S."/>
            <person name="Buckhaults P."/>
            <person name="Farrell C."/>
            <person name="Meeh P."/>
            <person name="Markowitz S.D."/>
            <person name="Willis J."/>
            <person name="Dawson D."/>
            <person name="Willson J.K.V."/>
            <person name="Gazdar A.F."/>
            <person name="Hartigan J."/>
            <person name="Wu L."/>
            <person name="Liu C."/>
            <person name="Parmigiani G."/>
            <person name="Park B.H."/>
            <person name="Bachman K.E."/>
            <person name="Papadopoulos N."/>
            <person name="Vogelstein B."/>
            <person name="Kinzler K.W."/>
            <person name="Velculescu V.E."/>
        </authorList>
    </citation>
    <scope>VARIANT [LARGE SCALE ANALYSIS] ILE-366</scope>
</reference>
<reference key="4">
    <citation type="journal article" date="2020" name="Clin. Genet.">
        <title>ADAMTS19-associated heart valve defects: Novel genetic variants consolidating a recognizable cardiac phenotype.</title>
        <authorList>
            <person name="Massadeh S."/>
            <person name="Alhashem A."/>
            <person name="van de Laar I.M.B.H."/>
            <person name="Alhabshan F."/>
            <person name="Ordonez N."/>
            <person name="Alawbathani S."/>
            <person name="Khan S."/>
            <person name="Kabbani M.S."/>
            <person name="Chaikhouni F."/>
            <person name="Sheereen A."/>
            <person name="Almohammed I."/>
            <person name="Alghamdi B."/>
            <person name="Frohn-Mulder I."/>
            <person name="Ahmad S."/>
            <person name="Beetz C."/>
            <person name="Bauer P."/>
            <person name="Wessels M.W."/>
            <person name="Alaamery M."/>
            <person name="Bertoli-Avella A.M."/>
        </authorList>
    </citation>
    <scope>VARIANTS CVDP2 653-ARG--SER-1213 DEL AND 1180-ARG--SER-1213 DEL</scope>
    <scope>INVOLVEMENT IN CVDP2</scope>
</reference>
<reference key="5">
    <citation type="journal article" date="2020" name="Nat. Genet.">
        <title>Loss of ADAMTS19 causes progressive non-syndromic heart valve disease.</title>
        <authorList>
            <consortium name="MIBAVA Leducq Consortium principal investigators"/>
            <person name="Wuennemann F."/>
            <person name="Ta-Shma A."/>
            <person name="Preuss C."/>
            <person name="Leclerc S."/>
            <person name="van Vliet P.P."/>
            <person name="Oneglia A."/>
            <person name="Thibeault M."/>
            <person name="Nordquist E."/>
            <person name="Lincoln J."/>
            <person name="Scharfenberg F."/>
            <person name="Becker-Pauly C."/>
            <person name="Hofmann P."/>
            <person name="Hoff K."/>
            <person name="Audain E."/>
            <person name="Kramer H.H."/>
            <person name="Makalowski W."/>
            <person name="Nir A."/>
            <person name="Gerety S.S."/>
            <person name="Hurles M."/>
            <person name="Comes J."/>
            <person name="Fournier A."/>
            <person name="Osinska H."/>
            <person name="Robins J."/>
            <person name="Puceat M."/>
            <person name="Elpeleg O."/>
            <person name="Hitz M.P."/>
            <person name="Andelfinger G."/>
        </authorList>
    </citation>
    <scope>VARIANT CVDP2 662-ARG--SER-1213 DEL</scope>
    <scope>INVOLVEMENT IN CVDP2</scope>
</reference>
<dbReference type="EC" id="3.4.24.-"/>
<dbReference type="EMBL" id="AC008425">
    <property type="status" value="NOT_ANNOTATED_CDS"/>
    <property type="molecule type" value="Genomic_DNA"/>
</dbReference>
<dbReference type="EMBL" id="AC008528">
    <property type="status" value="NOT_ANNOTATED_CDS"/>
    <property type="molecule type" value="Genomic_DNA"/>
</dbReference>
<dbReference type="EMBL" id="AC008591">
    <property type="status" value="NOT_ANNOTATED_CDS"/>
    <property type="molecule type" value="Genomic_DNA"/>
</dbReference>
<dbReference type="EMBL" id="AC106781">
    <property type="status" value="NOT_ANNOTATED_CDS"/>
    <property type="molecule type" value="Genomic_DNA"/>
</dbReference>
<dbReference type="EMBL" id="AC129713">
    <property type="status" value="NOT_ANNOTATED_CDS"/>
    <property type="molecule type" value="Genomic_DNA"/>
</dbReference>
<dbReference type="EMBL" id="AJ311904">
    <property type="protein sequence ID" value="CAC84565.1"/>
    <property type="molecule type" value="mRNA"/>
</dbReference>
<dbReference type="RefSeq" id="NP_598377.4">
    <property type="nucleotide sequence ID" value="NM_133638.4"/>
</dbReference>
<dbReference type="SMR" id="Q8TE59"/>
<dbReference type="BioGRID" id="128101">
    <property type="interactions" value="2"/>
</dbReference>
<dbReference type="FunCoup" id="Q8TE59">
    <property type="interactions" value="44"/>
</dbReference>
<dbReference type="IntAct" id="Q8TE59">
    <property type="interactions" value="2"/>
</dbReference>
<dbReference type="STRING" id="9606.ENSP00000274487"/>
<dbReference type="MEROPS" id="M12.029"/>
<dbReference type="GlyCosmos" id="Q8TE59">
    <property type="glycosylation" value="5 sites, No reported glycans"/>
</dbReference>
<dbReference type="GlyGen" id="Q8TE59">
    <property type="glycosylation" value="7 sites, 2 N-linked glycans (2 sites)"/>
</dbReference>
<dbReference type="iPTMnet" id="Q8TE59"/>
<dbReference type="PhosphoSitePlus" id="Q8TE59"/>
<dbReference type="BioMuta" id="ADAMTS19"/>
<dbReference type="DMDM" id="296434402"/>
<dbReference type="jPOST" id="Q8TE59"/>
<dbReference type="MassIVE" id="Q8TE59"/>
<dbReference type="PaxDb" id="9606-ENSP00000274487"/>
<dbReference type="PeptideAtlas" id="Q8TE59"/>
<dbReference type="ProteomicsDB" id="74401"/>
<dbReference type="Antibodypedia" id="52899">
    <property type="antibodies" value="124 antibodies from 20 providers"/>
</dbReference>
<dbReference type="DNASU" id="171019"/>
<dbReference type="GeneID" id="171019"/>
<dbReference type="KEGG" id="hsa:171019"/>
<dbReference type="MANE-Select" id="ENST00000274487.9">
    <property type="protein sequence ID" value="ENSP00000274487.5"/>
    <property type="RefSeq nucleotide sequence ID" value="NM_133638.6"/>
    <property type="RefSeq protein sequence ID" value="NP_598377.4"/>
</dbReference>
<dbReference type="UCSC" id="uc003kvb.2">
    <property type="organism name" value="human"/>
</dbReference>
<dbReference type="AGR" id="HGNC:17111"/>
<dbReference type="CTD" id="171019"/>
<dbReference type="DisGeNET" id="171019"/>
<dbReference type="GeneCards" id="ADAMTS19"/>
<dbReference type="HGNC" id="HGNC:17111">
    <property type="gene designation" value="ADAMTS19"/>
</dbReference>
<dbReference type="MalaCards" id="ADAMTS19"/>
<dbReference type="MIM" id="607513">
    <property type="type" value="gene"/>
</dbReference>
<dbReference type="MIM" id="620067">
    <property type="type" value="phenotype"/>
</dbReference>
<dbReference type="neXtProt" id="NX_Q8TE59"/>
<dbReference type="PharmGKB" id="PA24545"/>
<dbReference type="VEuPathDB" id="HostDB:ENSG00000145808"/>
<dbReference type="eggNOG" id="KOG3538">
    <property type="taxonomic scope" value="Eukaryota"/>
</dbReference>
<dbReference type="GeneTree" id="ENSGT00940000161018"/>
<dbReference type="HOGENOM" id="CLU_000660_8_1_1"/>
<dbReference type="InParanoid" id="Q8TE59"/>
<dbReference type="OMA" id="QHAEPDG"/>
<dbReference type="OrthoDB" id="10035764at2759"/>
<dbReference type="PAN-GO" id="Q8TE59">
    <property type="GO annotations" value="3 GO annotations based on evolutionary models"/>
</dbReference>
<dbReference type="PhylomeDB" id="Q8TE59"/>
<dbReference type="TreeFam" id="TF313537"/>
<dbReference type="PathwayCommons" id="Q8TE59"/>
<dbReference type="Reactome" id="R-HSA-5083635">
    <property type="pathway name" value="Defective B3GALTL causes PpS"/>
</dbReference>
<dbReference type="Reactome" id="R-HSA-5173214">
    <property type="pathway name" value="O-glycosylation of TSR domain-containing proteins"/>
</dbReference>
<dbReference type="SignaLink" id="Q8TE59"/>
<dbReference type="BioGRID-ORCS" id="171019">
    <property type="hits" value="10 hits in 1148 CRISPR screens"/>
</dbReference>
<dbReference type="ChiTaRS" id="ADAMTS19">
    <property type="organism name" value="human"/>
</dbReference>
<dbReference type="GenomeRNAi" id="171019"/>
<dbReference type="Pharos" id="Q8TE59">
    <property type="development level" value="Tbio"/>
</dbReference>
<dbReference type="PRO" id="PR:Q8TE59"/>
<dbReference type="Proteomes" id="UP000005640">
    <property type="component" value="Chromosome 5"/>
</dbReference>
<dbReference type="RNAct" id="Q8TE59">
    <property type="molecule type" value="protein"/>
</dbReference>
<dbReference type="Bgee" id="ENSG00000145808">
    <property type="expression patterns" value="Expressed in adrenal tissue and 97 other cell types or tissues"/>
</dbReference>
<dbReference type="ExpressionAtlas" id="A0A1X7SBR9">
    <property type="expression patterns" value="baseline and differential"/>
</dbReference>
<dbReference type="GO" id="GO:0031012">
    <property type="term" value="C:extracellular matrix"/>
    <property type="evidence" value="ECO:0000318"/>
    <property type="project" value="GO_Central"/>
</dbReference>
<dbReference type="GO" id="GO:0005576">
    <property type="term" value="C:extracellular region"/>
    <property type="evidence" value="ECO:0007669"/>
    <property type="project" value="UniProtKB-KW"/>
</dbReference>
<dbReference type="GO" id="GO:0046872">
    <property type="term" value="F:metal ion binding"/>
    <property type="evidence" value="ECO:0007669"/>
    <property type="project" value="UniProtKB-KW"/>
</dbReference>
<dbReference type="GO" id="GO:0004222">
    <property type="term" value="F:metalloendopeptidase activity"/>
    <property type="evidence" value="ECO:0000318"/>
    <property type="project" value="GO_Central"/>
</dbReference>
<dbReference type="GO" id="GO:0003180">
    <property type="term" value="P:aortic valve morphogenesis"/>
    <property type="evidence" value="ECO:0000315"/>
    <property type="project" value="BHF-UCL"/>
</dbReference>
<dbReference type="GO" id="GO:0030199">
    <property type="term" value="P:collagen fibril organization"/>
    <property type="evidence" value="ECO:0000250"/>
    <property type="project" value="BHF-UCL"/>
</dbReference>
<dbReference type="GO" id="GO:0030198">
    <property type="term" value="P:extracellular matrix organization"/>
    <property type="evidence" value="ECO:0000318"/>
    <property type="project" value="GO_Central"/>
</dbReference>
<dbReference type="GO" id="GO:0003183">
    <property type="term" value="P:mitral valve morphogenesis"/>
    <property type="evidence" value="ECO:0000315"/>
    <property type="project" value="BHF-UCL"/>
</dbReference>
<dbReference type="GO" id="GO:0006508">
    <property type="term" value="P:proteolysis"/>
    <property type="evidence" value="ECO:0000318"/>
    <property type="project" value="GO_Central"/>
</dbReference>
<dbReference type="GO" id="GO:0003184">
    <property type="term" value="P:pulmonary valve morphogenesis"/>
    <property type="evidence" value="ECO:0000315"/>
    <property type="project" value="BHF-UCL"/>
</dbReference>
<dbReference type="GO" id="GO:0003186">
    <property type="term" value="P:tricuspid valve morphogenesis"/>
    <property type="evidence" value="ECO:0000315"/>
    <property type="project" value="BHF-UCL"/>
</dbReference>
<dbReference type="GO" id="GO:0060412">
    <property type="term" value="P:ventricular septum morphogenesis"/>
    <property type="evidence" value="ECO:0000315"/>
    <property type="project" value="BHF-UCL"/>
</dbReference>
<dbReference type="CDD" id="cd04273">
    <property type="entry name" value="ZnMc_ADAMTS_like"/>
    <property type="match status" value="1"/>
</dbReference>
<dbReference type="FunFam" id="2.60.120.830:FF:000001">
    <property type="entry name" value="A disintegrin and metalloproteinase with thrombospondin motifs 1"/>
    <property type="match status" value="1"/>
</dbReference>
<dbReference type="FunFam" id="3.40.390.10:FF:000001">
    <property type="entry name" value="A disintegrin and metalloproteinase with thrombospondin motifs 1"/>
    <property type="match status" value="1"/>
</dbReference>
<dbReference type="FunFam" id="2.20.100.10:FF:000005">
    <property type="entry name" value="ADAM metallopeptidase with thrombospondin type 1 motif 9"/>
    <property type="match status" value="1"/>
</dbReference>
<dbReference type="Gene3D" id="2.60.120.830">
    <property type="match status" value="1"/>
</dbReference>
<dbReference type="Gene3D" id="3.40.1620.60">
    <property type="match status" value="1"/>
</dbReference>
<dbReference type="Gene3D" id="3.40.390.10">
    <property type="entry name" value="Collagenase (Catalytic Domain)"/>
    <property type="match status" value="1"/>
</dbReference>
<dbReference type="Gene3D" id="2.20.100.10">
    <property type="entry name" value="Thrombospondin type-1 (TSP1) repeat"/>
    <property type="match status" value="5"/>
</dbReference>
<dbReference type="InterPro" id="IPR006586">
    <property type="entry name" value="ADAM_Cys-rich"/>
</dbReference>
<dbReference type="InterPro" id="IPR013273">
    <property type="entry name" value="ADAMTS/ADAMTS-like"/>
</dbReference>
<dbReference type="InterPro" id="IPR056270">
    <property type="entry name" value="ADAMTS17/19_C"/>
</dbReference>
<dbReference type="InterPro" id="IPR050439">
    <property type="entry name" value="ADAMTS_ADAMTS-like"/>
</dbReference>
<dbReference type="InterPro" id="IPR041645">
    <property type="entry name" value="ADAMTS_CR_2"/>
</dbReference>
<dbReference type="InterPro" id="IPR010294">
    <property type="entry name" value="ADAMTS_spacer1"/>
</dbReference>
<dbReference type="InterPro" id="IPR024079">
    <property type="entry name" value="MetalloPept_cat_dom_sf"/>
</dbReference>
<dbReference type="InterPro" id="IPR001590">
    <property type="entry name" value="Peptidase_M12B"/>
</dbReference>
<dbReference type="InterPro" id="IPR010909">
    <property type="entry name" value="PLAC"/>
</dbReference>
<dbReference type="InterPro" id="IPR000884">
    <property type="entry name" value="TSP1_rpt"/>
</dbReference>
<dbReference type="InterPro" id="IPR036383">
    <property type="entry name" value="TSP1_rpt_sf"/>
</dbReference>
<dbReference type="PANTHER" id="PTHR13723:SF197">
    <property type="entry name" value="A DISINTEGRIN AND METALLOPROTEINASE WITH THROMBOSPONDIN MOTIFS 19"/>
    <property type="match status" value="1"/>
</dbReference>
<dbReference type="PANTHER" id="PTHR13723">
    <property type="entry name" value="ADAMTS A DISINTEGRIN AND METALLOPROTEASE WITH THROMBOSPONDIN MOTIFS PROTEASE"/>
    <property type="match status" value="1"/>
</dbReference>
<dbReference type="Pfam" id="PF23178">
    <property type="entry name" value="ADAMTS_C"/>
    <property type="match status" value="1"/>
</dbReference>
<dbReference type="Pfam" id="PF17771">
    <property type="entry name" value="ADAMTS_CR_2"/>
    <property type="match status" value="1"/>
</dbReference>
<dbReference type="Pfam" id="PF05986">
    <property type="entry name" value="ADAMTS_spacer1"/>
    <property type="match status" value="1"/>
</dbReference>
<dbReference type="Pfam" id="PF01421">
    <property type="entry name" value="Reprolysin"/>
    <property type="match status" value="1"/>
</dbReference>
<dbReference type="Pfam" id="PF19030">
    <property type="entry name" value="TSP1_ADAMTS"/>
    <property type="match status" value="4"/>
</dbReference>
<dbReference type="Pfam" id="PF00090">
    <property type="entry name" value="TSP_1"/>
    <property type="match status" value="1"/>
</dbReference>
<dbReference type="PRINTS" id="PR01857">
    <property type="entry name" value="ADAMTSFAMILY"/>
</dbReference>
<dbReference type="SMART" id="SM00608">
    <property type="entry name" value="ACR"/>
    <property type="match status" value="1"/>
</dbReference>
<dbReference type="SMART" id="SM00209">
    <property type="entry name" value="TSP1"/>
    <property type="match status" value="5"/>
</dbReference>
<dbReference type="SUPFAM" id="SSF55486">
    <property type="entry name" value="Metalloproteases ('zincins'), catalytic domain"/>
    <property type="match status" value="1"/>
</dbReference>
<dbReference type="SUPFAM" id="SSF82895">
    <property type="entry name" value="TSP-1 type 1 repeat"/>
    <property type="match status" value="5"/>
</dbReference>
<dbReference type="PROSITE" id="PS50215">
    <property type="entry name" value="ADAM_MEPRO"/>
    <property type="match status" value="1"/>
</dbReference>
<dbReference type="PROSITE" id="PS50900">
    <property type="entry name" value="PLAC"/>
    <property type="match status" value="1"/>
</dbReference>
<dbReference type="PROSITE" id="PS50092">
    <property type="entry name" value="TSP1"/>
    <property type="match status" value="5"/>
</dbReference>
<dbReference type="PROSITE" id="PS00142">
    <property type="entry name" value="ZINC_PROTEASE"/>
    <property type="match status" value="1"/>
</dbReference>
<feature type="signal peptide" evidence="2">
    <location>
        <begin position="1"/>
        <end position="27"/>
    </location>
</feature>
<feature type="propeptide" id="PRO_0000029202" evidence="1">
    <location>
        <begin position="28"/>
        <end position="322"/>
    </location>
</feature>
<feature type="chain" id="PRO_0000029203" description="A disintegrin and metalloproteinase with thrombospondin motifs 19">
    <location>
        <begin position="323"/>
        <end position="1213"/>
    </location>
</feature>
<feature type="domain" description="Peptidase M12B" evidence="5">
    <location>
        <begin position="331"/>
        <end position="551"/>
    </location>
</feature>
<feature type="domain" description="Disintegrin">
    <location>
        <begin position="552"/>
        <end position="639"/>
    </location>
</feature>
<feature type="domain" description="TSP type-1 1" evidence="3">
    <location>
        <begin position="640"/>
        <end position="692"/>
    </location>
</feature>
<feature type="domain" description="TSP type-1 2" evidence="3">
    <location>
        <begin position="921"/>
        <end position="981"/>
    </location>
</feature>
<feature type="domain" description="TSP type-1 3" evidence="3">
    <location>
        <begin position="982"/>
        <end position="1043"/>
    </location>
</feature>
<feature type="domain" description="TSP type-1 4" evidence="3">
    <location>
        <begin position="1045"/>
        <end position="1089"/>
    </location>
</feature>
<feature type="domain" description="TSP type-1 5" evidence="3">
    <location>
        <begin position="1093"/>
        <end position="1150"/>
    </location>
</feature>
<feature type="domain" description="PLAC" evidence="4">
    <location>
        <begin position="1166"/>
        <end position="1205"/>
    </location>
</feature>
<feature type="region of interest" description="Disordered" evidence="7">
    <location>
        <begin position="49"/>
        <end position="161"/>
    </location>
</feature>
<feature type="region of interest" description="Disordered" evidence="7">
    <location>
        <begin position="192"/>
        <end position="215"/>
    </location>
</feature>
<feature type="region of interest" description="Spacer">
    <location>
        <begin position="797"/>
        <end position="920"/>
    </location>
</feature>
<feature type="short sequence motif" description="Cysteine switch" evidence="1">
    <location>
        <begin position="298"/>
        <end position="305"/>
    </location>
</feature>
<feature type="compositionally biased region" description="Gly residues" evidence="7">
    <location>
        <begin position="52"/>
        <end position="71"/>
    </location>
</feature>
<feature type="compositionally biased region" description="Acidic residues" evidence="7">
    <location>
        <begin position="110"/>
        <end position="119"/>
    </location>
</feature>
<feature type="compositionally biased region" description="Low complexity" evidence="7">
    <location>
        <begin position="120"/>
        <end position="139"/>
    </location>
</feature>
<feature type="compositionally biased region" description="Pro residues" evidence="7">
    <location>
        <begin position="140"/>
        <end position="155"/>
    </location>
</feature>
<feature type="active site" evidence="5 6">
    <location>
        <position position="489"/>
    </location>
</feature>
<feature type="binding site" description="in inhibited form" evidence="1">
    <location>
        <position position="300"/>
    </location>
    <ligand>
        <name>Zn(2+)</name>
        <dbReference type="ChEBI" id="CHEBI:29105"/>
        <note>catalytic</note>
    </ligand>
</feature>
<feature type="binding site" evidence="1">
    <location>
        <position position="488"/>
    </location>
    <ligand>
        <name>Zn(2+)</name>
        <dbReference type="ChEBI" id="CHEBI:29105"/>
        <note>catalytic</note>
    </ligand>
</feature>
<feature type="binding site" evidence="1">
    <location>
        <position position="492"/>
    </location>
    <ligand>
        <name>Zn(2+)</name>
        <dbReference type="ChEBI" id="CHEBI:29105"/>
        <note>catalytic</note>
    </ligand>
</feature>
<feature type="binding site" evidence="1">
    <location>
        <position position="498"/>
    </location>
    <ligand>
        <name>Zn(2+)</name>
        <dbReference type="ChEBI" id="CHEBI:29105"/>
        <note>catalytic</note>
    </ligand>
</feature>
<feature type="glycosylation site" description="N-linked (GlcNAc...) asparagine" evidence="2">
    <location>
        <position position="266"/>
    </location>
</feature>
<feature type="glycosylation site" description="N-linked (GlcNAc...) asparagine" evidence="2">
    <location>
        <position position="803"/>
    </location>
</feature>
<feature type="glycosylation site" description="N-linked (GlcNAc...) asparagine" evidence="2">
    <location>
        <position position="913"/>
    </location>
</feature>
<feature type="glycosylation site" description="N-linked (GlcNAc...) asparagine" evidence="2">
    <location>
        <position position="955"/>
    </location>
</feature>
<feature type="glycosylation site" description="N-linked (GlcNAc...) asparagine" evidence="2">
    <location>
        <position position="1015"/>
    </location>
</feature>
<feature type="disulfide bond" evidence="1">
    <location>
        <begin position="407"/>
        <end position="472"/>
    </location>
</feature>
<feature type="disulfide bond" evidence="1">
    <location>
        <begin position="447"/>
        <end position="454"/>
    </location>
</feature>
<feature type="disulfide bond" evidence="1">
    <location>
        <begin position="466"/>
        <end position="546"/>
    </location>
</feature>
<feature type="disulfide bond" evidence="1">
    <location>
        <begin position="505"/>
        <end position="530"/>
    </location>
</feature>
<feature type="disulfide bond" evidence="1">
    <location>
        <begin position="575"/>
        <end position="599"/>
    </location>
</feature>
<feature type="disulfide bond" evidence="1">
    <location>
        <begin position="586"/>
        <end position="607"/>
    </location>
</feature>
<feature type="disulfide bond" evidence="1">
    <location>
        <begin position="594"/>
        <end position="626"/>
    </location>
</feature>
<feature type="disulfide bond" evidence="1">
    <location>
        <begin position="620"/>
        <end position="631"/>
    </location>
</feature>
<feature type="disulfide bond" evidence="1">
    <location>
        <begin position="651"/>
        <end position="686"/>
    </location>
</feature>
<feature type="disulfide bond" evidence="1">
    <location>
        <begin position="655"/>
        <end position="691"/>
    </location>
</feature>
<feature type="disulfide bond" evidence="1">
    <location>
        <begin position="666"/>
        <end position="676"/>
    </location>
</feature>
<feature type="disulfide bond" evidence="1">
    <location>
        <begin position="994"/>
        <end position="1037"/>
    </location>
</feature>
<feature type="disulfide bond" evidence="1">
    <location>
        <begin position="998"/>
        <end position="1042"/>
    </location>
</feature>
<feature type="disulfide bond" evidence="1">
    <location>
        <begin position="1009"/>
        <end position="1026"/>
    </location>
</feature>
<feature type="sequence variant" id="VAR_036154" description="In a breast cancer sample; somatic mutation." evidence="8">
    <original>L</original>
    <variation>I</variation>
    <location>
        <position position="366"/>
    </location>
</feature>
<feature type="sequence variant" id="VAR_057087" description="In dbSNP:rs10062501.">
    <original>E</original>
    <variation>G</variation>
    <location>
        <position position="588"/>
    </location>
</feature>
<feature type="sequence variant" id="VAR_087790" description="In CVDP2." evidence="10">
    <location>
        <begin position="653"/>
        <end position="1213"/>
    </location>
</feature>
<feature type="sequence variant" id="VAR_087791" description="In CVDP2." evidence="9">
    <location>
        <begin position="662"/>
        <end position="1213"/>
    </location>
</feature>
<feature type="sequence variant" id="VAR_024599" description="In dbSNP:rs11749126.">
    <original>Y</original>
    <variation>F</variation>
    <location>
        <position position="1095"/>
    </location>
</feature>
<feature type="sequence variant" id="VAR_087792" description="In CVDP2; uncertain significance." evidence="10">
    <location>
        <begin position="1180"/>
        <end position="1213"/>
    </location>
</feature>
<feature type="sequence conflict" description="In Ref. 2; CAC84565." evidence="11" ref="2">
    <original>S</original>
    <variation>G</variation>
    <location>
        <position position="373"/>
    </location>
</feature>
<feature type="sequence conflict" description="In Ref. 2; CAC84565." evidence="11" ref="2">
    <original>C</original>
    <variation>F</variation>
    <location>
        <position position="1054"/>
    </location>
</feature>
<proteinExistence type="evidence at protein level"/>
<gene>
    <name type="primary">ADAMTS19</name>
</gene>
<accession>Q8TE59</accession>
<accession>A0A1X7SBR9</accession>
<comment type="cofactor">
    <cofactor evidence="1">
        <name>Zn(2+)</name>
        <dbReference type="ChEBI" id="CHEBI:29105"/>
    </cofactor>
    <text evidence="1">Binds 1 zinc ion per subunit.</text>
</comment>
<comment type="subcellular location">
    <subcellularLocation>
        <location evidence="1">Secreted</location>
        <location evidence="1">Extracellular space</location>
        <location evidence="1">Extracellular matrix</location>
    </subcellularLocation>
</comment>
<comment type="tissue specificity">
    <text>Expressed in fetal lung, but not in any adult tissues examined. Expression was detected in an osteosarcoma cDNA library.</text>
</comment>
<comment type="domain">
    <text>The conserved cysteine present in the cysteine-switch motif binds the catalytic zinc ion, thus inhibiting the enzyme. The dissociation of the cysteine from the zinc ion upon the activation-peptide release activates the enzyme.</text>
</comment>
<comment type="PTM">
    <text evidence="1">The precursor is cleaved by a furin endopeptidase.</text>
</comment>
<comment type="PTM">
    <text evidence="1">Glycosylated. Can be O-fucosylated by POFUT2 on a serine or a threonine residue found within the consensus sequence C1-X(2)-(S/T)-C2-G of the TSP type-1 repeat domains where C1 and C2 are the first and second cysteine residue of the repeat, respectively. Fucosylated repeats can then be further glycosylated by the addition of a beta-1,3-glucose residue by the glucosyltransferase, B3GALTL. Fucosylation mediates the efficient secretion of ADAMTS family members. Can also be C-glycosylated with one or two mannose molecules on tryptophan residues within the consensus sequence W-X-X-W of the TPRs, and N-glycosylated. These other glycosylations can also facilitate secretion (By similarity).</text>
</comment>
<comment type="disease" evidence="9 10">
    <disease id="DI-06519">
        <name>Cardiac valvular dysplasia 2</name>
        <acronym>CVDP2</acronym>
        <description>An autosomal recessive form of congenital heart defects, characterized primarily by congenital stenosis and insufficiency of the semilunar valves, although mild insufficiency of the atrioventricular valves has been observed as well. Other features include subaortic stenosis and dilation of the ascending aorta and/or pulmonary artery in some patients.</description>
        <dbReference type="MIM" id="620067"/>
    </disease>
    <text>The disease is caused by variants affecting the gene represented in this entry.</text>
</comment>
<evidence type="ECO:0000250" key="1"/>
<evidence type="ECO:0000255" key="2"/>
<evidence type="ECO:0000255" key="3">
    <source>
        <dbReference type="PROSITE-ProRule" id="PRU00210"/>
    </source>
</evidence>
<evidence type="ECO:0000255" key="4">
    <source>
        <dbReference type="PROSITE-ProRule" id="PRU00233"/>
    </source>
</evidence>
<evidence type="ECO:0000255" key="5">
    <source>
        <dbReference type="PROSITE-ProRule" id="PRU00276"/>
    </source>
</evidence>
<evidence type="ECO:0000255" key="6">
    <source>
        <dbReference type="PROSITE-ProRule" id="PRU10095"/>
    </source>
</evidence>
<evidence type="ECO:0000256" key="7">
    <source>
        <dbReference type="SAM" id="MobiDB-lite"/>
    </source>
</evidence>
<evidence type="ECO:0000269" key="8">
    <source>
    </source>
</evidence>
<evidence type="ECO:0000269" key="9">
    <source>
    </source>
</evidence>
<evidence type="ECO:0000269" key="10">
    <source>
    </source>
</evidence>
<evidence type="ECO:0000305" key="11"/>
<protein>
    <recommendedName>
        <fullName>A disintegrin and metalloproteinase with thrombospondin motifs 19</fullName>
        <shortName>ADAM-TS 19</shortName>
        <shortName>ADAM-TS19</shortName>
        <shortName>ADAMTS-19</shortName>
        <ecNumber>3.4.24.-</ecNumber>
    </recommendedName>
</protein>
<organism>
    <name type="scientific">Homo sapiens</name>
    <name type="common">Human</name>
    <dbReference type="NCBI Taxonomy" id="9606"/>
    <lineage>
        <taxon>Eukaryota</taxon>
        <taxon>Metazoa</taxon>
        <taxon>Chordata</taxon>
        <taxon>Craniata</taxon>
        <taxon>Vertebrata</taxon>
        <taxon>Euteleostomi</taxon>
        <taxon>Mammalia</taxon>
        <taxon>Eutheria</taxon>
        <taxon>Euarchontoglires</taxon>
        <taxon>Primates</taxon>
        <taxon>Haplorrhini</taxon>
        <taxon>Catarrhini</taxon>
        <taxon>Hominidae</taxon>
        <taxon>Homo</taxon>
    </lineage>
</organism>
<sequence>MGKNREMRLTHICCCCLLYQLGFLSNGIVSELQFAPDREEWEVVFPALWRREPVDPAGGSGGSADPGWVRGVGGGGSARAQAAGSSREVRSVAPVPLEEPVEGRSESRLRPPPPSEGEEDEELESQELPRGSSGAAALSPGAPASWQPPPPPQPPPSPPPAQHAEPDGDEVLLRIPAFSRDLYLLLRRDGRFLAPRFAVEQRPNPGPGPTGAASAPQPPAPPDAGCFYTGAVLRHPGSLASFSTCGGGLMGFIQLNEDFIFIEPLNDTMAITGHPHRVYRQKRSMEEKVTEKSALHSHYCGIISDKGRPRSRKIAESGRGKRYSYKLPQEYNIETVVVADPAMVSYHGADAARRFILTILNMVFNLFQHKSLSVQVNLRVIKLILLHETPPELYIGHHGEKMLESFCKWQHEEFGKKNDIHLEMSTNWGEDMTSVDAAILITRKDFCVHKDEPCDTVGIAYLSGMCSEKRKCIIAEDNGLNLAFTIAHEMGHNMGINHDNDHPSCADGLHIMSGEWIKGQNLGDVSWSRCSKEDLERFLRSKASNCLLQTNPQSVNSVMVPSKLPGMTYTADEQCQILFGPLASFCQEMQHVICTGLWCKVEGEKECRTKLDPPMDGTDCDLGKWCKAGECTSRTSAPEHLAGEWSLWSPCSRTCSAGISSRERKCPGLDSEARDCNGPRKQYRICENPPCPAGLPGFRDWQCQAYSVRTSSPKHILQWQAVLDEEKPCALFCSPVGKEQPILLSEKVMDGTSCGYQGLDICANGRCQKVGCDGLLGSLAREDHCGVCNGNGKSCKIIKGDFNHTRGAGYVEVLVIPAGARRIKVVEEKPAHSYLALRDAGKQSINSDWKIEHSGAFNLAGTTVHYVRRGLWEKISAKGPTTAPLHLLVLLFQDQNYGLHYEYTIPSDPLPENQSSKAPEPLFMWTHTSWEDCDATCGGGERKTTVSCTKIMSKNISIVDNEKCKYLTKPEPQIRKCNEQPCQTRWMMTEWTPCSRTCGKGMQSRQVACTQQLSNGTLIRARERDCIGPKPASAQRCEGQDCMTVWEAGVWSECSVKCGKGIRHRTVRCTNPRKKCVLSTRPREAEDCEDYSKCYVWRMGDWSKCSITCGKGMQSRVIQCMHKITGRHGNECFSSEKPAAYRPCHLQPCNEKINVNTITSPRLAALTFKCLGDQWPVYCRVIREKNLCQDMRWYQRCCETCRDFYAQKLQQKS</sequence>
<keyword id="KW-0165">Cleavage on pair of basic residues</keyword>
<keyword id="KW-0225">Disease variant</keyword>
<keyword id="KW-1015">Disulfide bond</keyword>
<keyword id="KW-0272">Extracellular matrix</keyword>
<keyword id="KW-0325">Glycoprotein</keyword>
<keyword id="KW-0378">Hydrolase</keyword>
<keyword id="KW-0479">Metal-binding</keyword>
<keyword id="KW-0482">Metalloprotease</keyword>
<keyword id="KW-0645">Protease</keyword>
<keyword id="KW-1267">Proteomics identification</keyword>
<keyword id="KW-1185">Reference proteome</keyword>
<keyword id="KW-0677">Repeat</keyword>
<keyword id="KW-0964">Secreted</keyword>
<keyword id="KW-0732">Signal</keyword>
<keyword id="KW-0862">Zinc</keyword>
<keyword id="KW-0865">Zymogen</keyword>